<keyword id="KW-0066">ATP synthesis</keyword>
<keyword id="KW-0997">Cell inner membrane</keyword>
<keyword id="KW-1003">Cell membrane</keyword>
<keyword id="KW-0138">CF(0)</keyword>
<keyword id="KW-0375">Hydrogen ion transport</keyword>
<keyword id="KW-0406">Ion transport</keyword>
<keyword id="KW-0472">Membrane</keyword>
<keyword id="KW-0812">Transmembrane</keyword>
<keyword id="KW-1133">Transmembrane helix</keyword>
<keyword id="KW-0813">Transport</keyword>
<accession>A6QAM3</accession>
<dbReference type="EMBL" id="AP009179">
    <property type="protein sequence ID" value="BAF72532.1"/>
    <property type="molecule type" value="Genomic_DNA"/>
</dbReference>
<dbReference type="RefSeq" id="WP_012083338.1">
    <property type="nucleotide sequence ID" value="NC_009663.1"/>
</dbReference>
<dbReference type="SMR" id="A6QAM3"/>
<dbReference type="STRING" id="387093.SUN_1582"/>
<dbReference type="KEGG" id="sun:SUN_1582"/>
<dbReference type="eggNOG" id="COG0356">
    <property type="taxonomic scope" value="Bacteria"/>
</dbReference>
<dbReference type="HOGENOM" id="CLU_041018_2_2_7"/>
<dbReference type="OrthoDB" id="9789241at2"/>
<dbReference type="Proteomes" id="UP000006378">
    <property type="component" value="Chromosome"/>
</dbReference>
<dbReference type="GO" id="GO:0005886">
    <property type="term" value="C:plasma membrane"/>
    <property type="evidence" value="ECO:0007669"/>
    <property type="project" value="UniProtKB-SubCell"/>
</dbReference>
<dbReference type="GO" id="GO:0045259">
    <property type="term" value="C:proton-transporting ATP synthase complex"/>
    <property type="evidence" value="ECO:0007669"/>
    <property type="project" value="UniProtKB-KW"/>
</dbReference>
<dbReference type="GO" id="GO:0046933">
    <property type="term" value="F:proton-transporting ATP synthase activity, rotational mechanism"/>
    <property type="evidence" value="ECO:0007669"/>
    <property type="project" value="UniProtKB-UniRule"/>
</dbReference>
<dbReference type="GO" id="GO:0042777">
    <property type="term" value="P:proton motive force-driven plasma membrane ATP synthesis"/>
    <property type="evidence" value="ECO:0007669"/>
    <property type="project" value="TreeGrafter"/>
</dbReference>
<dbReference type="CDD" id="cd00310">
    <property type="entry name" value="ATP-synt_Fo_a_6"/>
    <property type="match status" value="1"/>
</dbReference>
<dbReference type="FunFam" id="1.20.120.220:FF:000006">
    <property type="entry name" value="ATP synthase subunit a"/>
    <property type="match status" value="1"/>
</dbReference>
<dbReference type="Gene3D" id="1.20.120.220">
    <property type="entry name" value="ATP synthase, F0 complex, subunit A"/>
    <property type="match status" value="1"/>
</dbReference>
<dbReference type="HAMAP" id="MF_01393">
    <property type="entry name" value="ATP_synth_a_bact"/>
    <property type="match status" value="1"/>
</dbReference>
<dbReference type="InterPro" id="IPR045082">
    <property type="entry name" value="ATP_syn_F0_a_bact/chloroplast"/>
</dbReference>
<dbReference type="InterPro" id="IPR000568">
    <property type="entry name" value="ATP_synth_F0_asu"/>
</dbReference>
<dbReference type="InterPro" id="IPR023011">
    <property type="entry name" value="ATP_synth_F0_asu_AS"/>
</dbReference>
<dbReference type="InterPro" id="IPR035908">
    <property type="entry name" value="F0_ATP_A_sf"/>
</dbReference>
<dbReference type="NCBIfam" id="TIGR01131">
    <property type="entry name" value="ATP_synt_6_or_A"/>
    <property type="match status" value="1"/>
</dbReference>
<dbReference type="NCBIfam" id="NF004481">
    <property type="entry name" value="PRK05815.2-3"/>
    <property type="match status" value="1"/>
</dbReference>
<dbReference type="PANTHER" id="PTHR42823">
    <property type="entry name" value="ATP SYNTHASE SUBUNIT A, CHLOROPLASTIC"/>
    <property type="match status" value="1"/>
</dbReference>
<dbReference type="PANTHER" id="PTHR42823:SF3">
    <property type="entry name" value="ATP SYNTHASE SUBUNIT A, CHLOROPLASTIC"/>
    <property type="match status" value="1"/>
</dbReference>
<dbReference type="Pfam" id="PF00119">
    <property type="entry name" value="ATP-synt_A"/>
    <property type="match status" value="1"/>
</dbReference>
<dbReference type="PRINTS" id="PR00123">
    <property type="entry name" value="ATPASEA"/>
</dbReference>
<dbReference type="SUPFAM" id="SSF81336">
    <property type="entry name" value="F1F0 ATP synthase subunit A"/>
    <property type="match status" value="1"/>
</dbReference>
<dbReference type="PROSITE" id="PS00449">
    <property type="entry name" value="ATPASE_A"/>
    <property type="match status" value="1"/>
</dbReference>
<comment type="function">
    <text evidence="1">Key component of the proton channel; it plays a direct role in the translocation of protons across the membrane.</text>
</comment>
<comment type="subunit">
    <text evidence="1">F-type ATPases have 2 components, CF(1) - the catalytic core - and CF(0) - the membrane proton channel. CF(1) has five subunits: alpha(3), beta(3), gamma(1), delta(1), epsilon(1). CF(0) has three main subunits: a(1), b(2) and c(9-12). The alpha and beta chains form an alternating ring which encloses part of the gamma chain. CF(1) is attached to CF(0) by a central stalk formed by the gamma and epsilon chains, while a peripheral stalk is formed by the delta and b chains.</text>
</comment>
<comment type="subcellular location">
    <subcellularLocation>
        <location evidence="1">Cell inner membrane</location>
        <topology evidence="1">Multi-pass membrane protein</topology>
    </subcellularLocation>
</comment>
<comment type="similarity">
    <text evidence="1">Belongs to the ATPase A chain family.</text>
</comment>
<reference key="1">
    <citation type="journal article" date="2007" name="Proc. Natl. Acad. Sci. U.S.A.">
        <title>Deep-sea vent epsilon-proteobacterial genomes provide insights into emergence of pathogens.</title>
        <authorList>
            <person name="Nakagawa S."/>
            <person name="Takaki Y."/>
            <person name="Shimamura S."/>
            <person name="Reysenbach A.-L."/>
            <person name="Takai K."/>
            <person name="Horikoshi K."/>
        </authorList>
    </citation>
    <scope>NUCLEOTIDE SEQUENCE [LARGE SCALE GENOMIC DNA]</scope>
    <source>
        <strain>NBC37-1</strain>
    </source>
</reference>
<protein>
    <recommendedName>
        <fullName evidence="1">ATP synthase subunit a</fullName>
    </recommendedName>
    <alternativeName>
        <fullName evidence="1">ATP synthase F0 sector subunit a</fullName>
    </alternativeName>
    <alternativeName>
        <fullName evidence="1">F-ATPase subunit 6</fullName>
    </alternativeName>
</protein>
<evidence type="ECO:0000255" key="1">
    <source>
        <dbReference type="HAMAP-Rule" id="MF_01393"/>
    </source>
</evidence>
<feature type="chain" id="PRO_0000362480" description="ATP synthase subunit a">
    <location>
        <begin position="1"/>
        <end position="241"/>
    </location>
</feature>
<feature type="transmembrane region" description="Helical" evidence="1">
    <location>
        <begin position="19"/>
        <end position="39"/>
    </location>
</feature>
<feature type="transmembrane region" description="Helical" evidence="1">
    <location>
        <begin position="80"/>
        <end position="100"/>
    </location>
</feature>
<feature type="transmembrane region" description="Helical" evidence="1">
    <location>
        <begin position="106"/>
        <end position="126"/>
    </location>
</feature>
<feature type="transmembrane region" description="Helical" evidence="1">
    <location>
        <begin position="135"/>
        <end position="155"/>
    </location>
</feature>
<feature type="transmembrane region" description="Helical" evidence="1">
    <location>
        <begin position="177"/>
        <end position="197"/>
    </location>
</feature>
<feature type="transmembrane region" description="Helical" evidence="1">
    <location>
        <begin position="203"/>
        <end position="223"/>
    </location>
</feature>
<organism>
    <name type="scientific">Sulfurovum sp. (strain NBC37-1)</name>
    <dbReference type="NCBI Taxonomy" id="387093"/>
    <lineage>
        <taxon>Bacteria</taxon>
        <taxon>Pseudomonadati</taxon>
        <taxon>Campylobacterota</taxon>
        <taxon>Epsilonproteobacteria</taxon>
        <taxon>Campylobacterales</taxon>
        <taxon>Sulfurovaceae</taxon>
        <taxon>Sulfurovum</taxon>
    </lineage>
</organism>
<gene>
    <name evidence="1" type="primary">atpB</name>
    <name type="ordered locus">SUN_1582</name>
</gene>
<proteinExistence type="inferred from homology"/>
<name>ATP6_SULNB</name>
<sequence length="241" mass="26183">MEGVFTYLGGILGEDSHSAVLIAHLLLVAVIVIMIAKMATKSFRAVPNGTQNVMEAYLGGVVAMGKDVIGEELARKYLPLVAAVGLFIFVSNVIGIIPGFESPTSNINVTLPLALMVFVYYNYEGIKKHGVVHYFAHFAGPVKLLAPLMFPIEIVSHLSRIISLSFRLFGNIKGDDLFLWVLLMLVPFVAPLPAYLLLTFSALLQTFVFMILIYVYLAGAVAIDEEHEKAPAPAIDTMGAV</sequence>